<evidence type="ECO:0000255" key="1">
    <source>
        <dbReference type="HAMAP-Rule" id="MF_01599"/>
    </source>
</evidence>
<feature type="chain" id="PRO_0000333094" description="Na(+)/H(+) antiporter NhaB">
    <location>
        <begin position="1"/>
        <end position="513"/>
    </location>
</feature>
<feature type="transmembrane region" description="Helical" evidence="1">
    <location>
        <begin position="23"/>
        <end position="43"/>
    </location>
</feature>
<feature type="transmembrane region" description="Helical" evidence="1">
    <location>
        <begin position="52"/>
        <end position="72"/>
    </location>
</feature>
<feature type="transmembrane region" description="Helical" evidence="1">
    <location>
        <begin position="97"/>
        <end position="117"/>
    </location>
</feature>
<feature type="transmembrane region" description="Helical" evidence="1">
    <location>
        <begin position="120"/>
        <end position="140"/>
    </location>
</feature>
<feature type="transmembrane region" description="Helical" evidence="1">
    <location>
        <begin position="144"/>
        <end position="164"/>
    </location>
</feature>
<feature type="transmembrane region" description="Helical" evidence="1">
    <location>
        <begin position="202"/>
        <end position="222"/>
    </location>
</feature>
<feature type="transmembrane region" description="Helical" evidence="1">
    <location>
        <begin position="238"/>
        <end position="258"/>
    </location>
</feature>
<feature type="transmembrane region" description="Helical" evidence="1">
    <location>
        <begin position="303"/>
        <end position="323"/>
    </location>
</feature>
<feature type="transmembrane region" description="Helical" evidence="1">
    <location>
        <begin position="348"/>
        <end position="368"/>
    </location>
</feature>
<feature type="transmembrane region" description="Helical" evidence="1">
    <location>
        <begin position="391"/>
        <end position="411"/>
    </location>
</feature>
<feature type="transmembrane region" description="Helical" evidence="1">
    <location>
        <begin position="447"/>
        <end position="467"/>
    </location>
</feature>
<feature type="transmembrane region" description="Helical" evidence="1">
    <location>
        <begin position="475"/>
        <end position="495"/>
    </location>
</feature>
<dbReference type="EMBL" id="CP000802">
    <property type="protein sequence ID" value="ABV05624.1"/>
    <property type="molecule type" value="Genomic_DNA"/>
</dbReference>
<dbReference type="RefSeq" id="WP_000406391.1">
    <property type="nucleotide sequence ID" value="NC_009800.1"/>
</dbReference>
<dbReference type="SMR" id="A7ZZC0"/>
<dbReference type="GeneID" id="75203299"/>
<dbReference type="KEGG" id="ecx:EcHS_A1289"/>
<dbReference type="HOGENOM" id="CLU_041110_0_0_6"/>
<dbReference type="GO" id="GO:0005886">
    <property type="term" value="C:plasma membrane"/>
    <property type="evidence" value="ECO:0007669"/>
    <property type="project" value="UniProtKB-SubCell"/>
</dbReference>
<dbReference type="GO" id="GO:0015385">
    <property type="term" value="F:sodium:proton antiporter activity"/>
    <property type="evidence" value="ECO:0007669"/>
    <property type="project" value="InterPro"/>
</dbReference>
<dbReference type="HAMAP" id="MF_01599">
    <property type="entry name" value="NhaB"/>
    <property type="match status" value="1"/>
</dbReference>
<dbReference type="InterPro" id="IPR004671">
    <property type="entry name" value="Na+/H+_antiporter_NhaB"/>
</dbReference>
<dbReference type="NCBIfam" id="TIGR00774">
    <property type="entry name" value="NhaB"/>
    <property type="match status" value="1"/>
</dbReference>
<dbReference type="NCBIfam" id="NF007093">
    <property type="entry name" value="PRK09547.1"/>
    <property type="match status" value="1"/>
</dbReference>
<dbReference type="PANTHER" id="PTHR43302:SF1">
    <property type="entry name" value="NA(+)_H(+) ANTIPORTER NHAB"/>
    <property type="match status" value="1"/>
</dbReference>
<dbReference type="PANTHER" id="PTHR43302">
    <property type="entry name" value="TRANSPORTER ARSB-RELATED"/>
    <property type="match status" value="1"/>
</dbReference>
<dbReference type="Pfam" id="PF06450">
    <property type="entry name" value="NhaB"/>
    <property type="match status" value="1"/>
</dbReference>
<name>NHAB_ECOHS</name>
<reference key="1">
    <citation type="journal article" date="2008" name="J. Bacteriol.">
        <title>The pangenome structure of Escherichia coli: comparative genomic analysis of E. coli commensal and pathogenic isolates.</title>
        <authorList>
            <person name="Rasko D.A."/>
            <person name="Rosovitz M.J."/>
            <person name="Myers G.S.A."/>
            <person name="Mongodin E.F."/>
            <person name="Fricke W.F."/>
            <person name="Gajer P."/>
            <person name="Crabtree J."/>
            <person name="Sebaihia M."/>
            <person name="Thomson N.R."/>
            <person name="Chaudhuri R."/>
            <person name="Henderson I.R."/>
            <person name="Sperandio V."/>
            <person name="Ravel J."/>
        </authorList>
    </citation>
    <scope>NUCLEOTIDE SEQUENCE [LARGE SCALE GENOMIC DNA]</scope>
    <source>
        <strain>HS</strain>
    </source>
</reference>
<organism>
    <name type="scientific">Escherichia coli O9:H4 (strain HS)</name>
    <dbReference type="NCBI Taxonomy" id="331112"/>
    <lineage>
        <taxon>Bacteria</taxon>
        <taxon>Pseudomonadati</taxon>
        <taxon>Pseudomonadota</taxon>
        <taxon>Gammaproteobacteria</taxon>
        <taxon>Enterobacterales</taxon>
        <taxon>Enterobacteriaceae</taxon>
        <taxon>Escherichia</taxon>
    </lineage>
</organism>
<proteinExistence type="inferred from homology"/>
<gene>
    <name evidence="1" type="primary">nhaB</name>
    <name type="ordered locus">EcHS_A1289</name>
</gene>
<accession>A7ZZC0</accession>
<protein>
    <recommendedName>
        <fullName evidence="1">Na(+)/H(+) antiporter NhaB</fullName>
    </recommendedName>
    <alternativeName>
        <fullName evidence="1">Sodium/proton antiporter NhaB</fullName>
    </alternativeName>
</protein>
<sequence>MEISWGRALWRNFLGQSPDWYKLALIIFLIVNPLIFLISPFVAGWLLVAEFIFTLAMALKCYPLLPGGLLAIEAVFIGMTSAEHVREEVAANLEVLLLLMFMVAGIYFMKQLLLFIFTRLLLSIRSKMLLSLSFCVAAAFLSAFLDALTVVAVVISVAVGFYGIYHRVASSRTEDTDLQDDSHIDKHYKVVLEQFRGFLRSLMMHAGVGTALGGVMTMVGEPQNLIIAKAAGWHFGDFFLRMSPVTVPVLICGLLTCLLVEKLRWFGYGETLPEKVREVLQQFDDQSRHQRTRQDKIRLIVQAIIGVWLVTALALHLAEVGLIGLSVIILATSLTGVTDEHAIGKAFTESLPFTALLTVFFSVVAVIIDQQLFSPIIQFVLQASEHAQLSLFYIFNGLLSSISDNVFVGTIYINEAKAAMESGAITLKQYELLAVAINTGTNLPSVATPNGQAAFLFLLTSALAPLIRLSYGRMVWMALPYTLVLTLVGLLCVEFTLAPVTEWFMQMGWIATL</sequence>
<keyword id="KW-0050">Antiport</keyword>
<keyword id="KW-0997">Cell inner membrane</keyword>
<keyword id="KW-1003">Cell membrane</keyword>
<keyword id="KW-0406">Ion transport</keyword>
<keyword id="KW-0472">Membrane</keyword>
<keyword id="KW-0915">Sodium</keyword>
<keyword id="KW-0739">Sodium transport</keyword>
<keyword id="KW-0812">Transmembrane</keyword>
<keyword id="KW-1133">Transmembrane helix</keyword>
<keyword id="KW-0813">Transport</keyword>
<comment type="function">
    <text evidence="1">Na(+)/H(+) antiporter that extrudes sodium in exchange for external protons.</text>
</comment>
<comment type="catalytic activity">
    <reaction evidence="1">
        <text>2 Na(+)(in) + 3 H(+)(out) = 2 Na(+)(out) + 3 H(+)(in)</text>
        <dbReference type="Rhea" id="RHEA:29247"/>
        <dbReference type="ChEBI" id="CHEBI:15378"/>
        <dbReference type="ChEBI" id="CHEBI:29101"/>
    </reaction>
    <physiologicalReaction direction="left-to-right" evidence="1">
        <dbReference type="Rhea" id="RHEA:29248"/>
    </physiologicalReaction>
</comment>
<comment type="subcellular location">
    <subcellularLocation>
        <location evidence="1">Cell inner membrane</location>
        <topology evidence="1">Multi-pass membrane protein</topology>
    </subcellularLocation>
</comment>
<comment type="similarity">
    <text evidence="1">Belongs to the NhaB Na(+)/H(+) (TC 2.A.34) antiporter family.</text>
</comment>